<protein>
    <recommendedName>
        <fullName>F-box protein pof15</fullName>
    </recommendedName>
</protein>
<comment type="function">
    <text evidence="1">Probable substrate recognition component of a SCF (SKP1-CUL1-F-box protein) E3 ubiquitin-protein ligase complex that mediates the ubiquitination and subsequent proteasomal degradation of target proteins.</text>
</comment>
<comment type="pathway">
    <text>Protein modification; protein ubiquitination.</text>
</comment>
<evidence type="ECO:0000250" key="1"/>
<sequence>MSCVTRAPMSVPQTALQPNSYVNFDAQQTSSTLLPVEVIDSVMQYLPAHDVIQSSFASYPLTLIANKIIRARLSFLDEYSLRVFAKDVYTDSPICNLSARRGLYSLQYDGYSVFHLDPNNCSSIFQISFEDDEDLASFERYPGEFLAPHINVRIHVTLSRSSCDRHQADIFSCFQDPIRVRRDWLDSIKPGQPETLWFDQNTQHVIGLIVTRVDAAPGKYDLSVTSVIVQTEYLLSCLEKRVH</sequence>
<name>POF15_SCHPO</name>
<keyword id="KW-1185">Reference proteome</keyword>
<keyword id="KW-0833">Ubl conjugation pathway</keyword>
<reference key="1">
    <citation type="journal article" date="2002" name="Nature">
        <title>The genome sequence of Schizosaccharomyces pombe.</title>
        <authorList>
            <person name="Wood V."/>
            <person name="Gwilliam R."/>
            <person name="Rajandream M.A."/>
            <person name="Lyne M.H."/>
            <person name="Lyne R."/>
            <person name="Stewart A."/>
            <person name="Sgouros J.G."/>
            <person name="Peat N."/>
            <person name="Hayles J."/>
            <person name="Baker S.G."/>
            <person name="Basham D."/>
            <person name="Bowman S."/>
            <person name="Brooks K."/>
            <person name="Brown D."/>
            <person name="Brown S."/>
            <person name="Chillingworth T."/>
            <person name="Churcher C.M."/>
            <person name="Collins M."/>
            <person name="Connor R."/>
            <person name="Cronin A."/>
            <person name="Davis P."/>
            <person name="Feltwell T."/>
            <person name="Fraser A."/>
            <person name="Gentles S."/>
            <person name="Goble A."/>
            <person name="Hamlin N."/>
            <person name="Harris D.E."/>
            <person name="Hidalgo J."/>
            <person name="Hodgson G."/>
            <person name="Holroyd S."/>
            <person name="Hornsby T."/>
            <person name="Howarth S."/>
            <person name="Huckle E.J."/>
            <person name="Hunt S."/>
            <person name="Jagels K."/>
            <person name="James K.D."/>
            <person name="Jones L."/>
            <person name="Jones M."/>
            <person name="Leather S."/>
            <person name="McDonald S."/>
            <person name="McLean J."/>
            <person name="Mooney P."/>
            <person name="Moule S."/>
            <person name="Mungall K.L."/>
            <person name="Murphy L.D."/>
            <person name="Niblett D."/>
            <person name="Odell C."/>
            <person name="Oliver K."/>
            <person name="O'Neil S."/>
            <person name="Pearson D."/>
            <person name="Quail M.A."/>
            <person name="Rabbinowitsch E."/>
            <person name="Rutherford K.M."/>
            <person name="Rutter S."/>
            <person name="Saunders D."/>
            <person name="Seeger K."/>
            <person name="Sharp S."/>
            <person name="Skelton J."/>
            <person name="Simmonds M.N."/>
            <person name="Squares R."/>
            <person name="Squares S."/>
            <person name="Stevens K."/>
            <person name="Taylor K."/>
            <person name="Taylor R.G."/>
            <person name="Tivey A."/>
            <person name="Walsh S.V."/>
            <person name="Warren T."/>
            <person name="Whitehead S."/>
            <person name="Woodward J.R."/>
            <person name="Volckaert G."/>
            <person name="Aert R."/>
            <person name="Robben J."/>
            <person name="Grymonprez B."/>
            <person name="Weltjens I."/>
            <person name="Vanstreels E."/>
            <person name="Rieger M."/>
            <person name="Schaefer M."/>
            <person name="Mueller-Auer S."/>
            <person name="Gabel C."/>
            <person name="Fuchs M."/>
            <person name="Duesterhoeft A."/>
            <person name="Fritzc C."/>
            <person name="Holzer E."/>
            <person name="Moestl D."/>
            <person name="Hilbert H."/>
            <person name="Borzym K."/>
            <person name="Langer I."/>
            <person name="Beck A."/>
            <person name="Lehrach H."/>
            <person name="Reinhardt R."/>
            <person name="Pohl T.M."/>
            <person name="Eger P."/>
            <person name="Zimmermann W."/>
            <person name="Wedler H."/>
            <person name="Wambutt R."/>
            <person name="Purnelle B."/>
            <person name="Goffeau A."/>
            <person name="Cadieu E."/>
            <person name="Dreano S."/>
            <person name="Gloux S."/>
            <person name="Lelaure V."/>
            <person name="Mottier S."/>
            <person name="Galibert F."/>
            <person name="Aves S.J."/>
            <person name="Xiang Z."/>
            <person name="Hunt C."/>
            <person name="Moore K."/>
            <person name="Hurst S.M."/>
            <person name="Lucas M."/>
            <person name="Rochet M."/>
            <person name="Gaillardin C."/>
            <person name="Tallada V.A."/>
            <person name="Garzon A."/>
            <person name="Thode G."/>
            <person name="Daga R.R."/>
            <person name="Cruzado L."/>
            <person name="Jimenez J."/>
            <person name="Sanchez M."/>
            <person name="del Rey F."/>
            <person name="Benito J."/>
            <person name="Dominguez A."/>
            <person name="Revuelta J.L."/>
            <person name="Moreno S."/>
            <person name="Armstrong J."/>
            <person name="Forsburg S.L."/>
            <person name="Cerutti L."/>
            <person name="Lowe T."/>
            <person name="McCombie W.R."/>
            <person name="Paulsen I."/>
            <person name="Potashkin J."/>
            <person name="Shpakovski G.V."/>
            <person name="Ussery D."/>
            <person name="Barrell B.G."/>
            <person name="Nurse P."/>
        </authorList>
    </citation>
    <scope>NUCLEOTIDE SEQUENCE [LARGE SCALE GENOMIC DNA]</scope>
    <source>
        <strain>972 / ATCC 24843</strain>
    </source>
</reference>
<dbReference type="EMBL" id="CU329670">
    <property type="protein sequence ID" value="CAC21487.1"/>
    <property type="molecule type" value="Genomic_DNA"/>
</dbReference>
<dbReference type="RefSeq" id="NP_593528.1">
    <property type="nucleotide sequence ID" value="NM_001018962.2"/>
</dbReference>
<dbReference type="BioGRID" id="279857">
    <property type="interactions" value="40"/>
</dbReference>
<dbReference type="STRING" id="284812.Q9HDX6"/>
<dbReference type="PaxDb" id="4896-SPAPB1A10.14.1"/>
<dbReference type="EnsemblFungi" id="SPAPB1A10.14.1">
    <property type="protein sequence ID" value="SPAPB1A10.14.1:pep"/>
    <property type="gene ID" value="SPAPB1A10.14"/>
</dbReference>
<dbReference type="GeneID" id="2543437"/>
<dbReference type="KEGG" id="spo:2543437"/>
<dbReference type="PomBase" id="SPAPB1A10.14">
    <property type="gene designation" value="pof15"/>
</dbReference>
<dbReference type="VEuPathDB" id="FungiDB:SPAPB1A10.14"/>
<dbReference type="HOGENOM" id="CLU_1143102_0_0_1"/>
<dbReference type="InParanoid" id="Q9HDX6"/>
<dbReference type="OMA" id="DQNTQHV"/>
<dbReference type="UniPathway" id="UPA00143"/>
<dbReference type="PRO" id="PR:Q9HDX6"/>
<dbReference type="Proteomes" id="UP000002485">
    <property type="component" value="Chromosome I"/>
</dbReference>
<dbReference type="GO" id="GO:0000151">
    <property type="term" value="C:ubiquitin ligase complex"/>
    <property type="evidence" value="ECO:0000303"/>
    <property type="project" value="PomBase"/>
</dbReference>
<dbReference type="GO" id="GO:1990756">
    <property type="term" value="F:ubiquitin-like ligase-substrate adaptor activity"/>
    <property type="evidence" value="ECO:0000303"/>
    <property type="project" value="PomBase"/>
</dbReference>
<dbReference type="GO" id="GO:0016567">
    <property type="term" value="P:protein ubiquitination"/>
    <property type="evidence" value="ECO:0007669"/>
    <property type="project" value="UniProtKB-UniPathway"/>
</dbReference>
<feature type="chain" id="PRO_0000116823" description="F-box protein pof15">
    <location>
        <begin position="1"/>
        <end position="243"/>
    </location>
</feature>
<feature type="domain" description="F-box">
    <location>
        <begin position="28"/>
        <end position="73"/>
    </location>
</feature>
<gene>
    <name type="primary">pof15</name>
    <name type="ORF">SPAPB1A10.14</name>
</gene>
<accession>Q9HDX6</accession>
<proteinExistence type="inferred from homology"/>
<organism>
    <name type="scientific">Schizosaccharomyces pombe (strain 972 / ATCC 24843)</name>
    <name type="common">Fission yeast</name>
    <dbReference type="NCBI Taxonomy" id="284812"/>
    <lineage>
        <taxon>Eukaryota</taxon>
        <taxon>Fungi</taxon>
        <taxon>Dikarya</taxon>
        <taxon>Ascomycota</taxon>
        <taxon>Taphrinomycotina</taxon>
        <taxon>Schizosaccharomycetes</taxon>
        <taxon>Schizosaccharomycetales</taxon>
        <taxon>Schizosaccharomycetaceae</taxon>
        <taxon>Schizosaccharomyces</taxon>
    </lineage>
</organism>